<comment type="subunit">
    <text evidence="1">Part of the 50S ribosomal subunit. Contacts protein L32.</text>
</comment>
<comment type="similarity">
    <text evidence="1">Belongs to the bacterial ribosomal protein bL17 family.</text>
</comment>
<protein>
    <recommendedName>
        <fullName evidence="1">Large ribosomal subunit protein bL17</fullName>
    </recommendedName>
    <alternativeName>
        <fullName evidence="2">50S ribosomal protein L17</fullName>
    </alternativeName>
</protein>
<dbReference type="EMBL" id="CP001182">
    <property type="protein sequence ID" value="ACJ42871.1"/>
    <property type="molecule type" value="Genomic_DNA"/>
</dbReference>
<dbReference type="RefSeq" id="WP_001216378.1">
    <property type="nucleotide sequence ID" value="NC_011586.2"/>
</dbReference>
<dbReference type="PDB" id="6V39">
    <property type="method" value="EM"/>
    <property type="resolution" value="3.04 A"/>
    <property type="chains" value="M=1-125"/>
</dbReference>
<dbReference type="PDB" id="6V3A">
    <property type="method" value="EM"/>
    <property type="resolution" value="2.82 A"/>
    <property type="chains" value="M=1-125"/>
</dbReference>
<dbReference type="PDB" id="6V3B">
    <property type="method" value="EM"/>
    <property type="resolution" value="2.91 A"/>
    <property type="chains" value="M=1-125"/>
</dbReference>
<dbReference type="PDB" id="6V3D">
    <property type="method" value="EM"/>
    <property type="resolution" value="2.95 A"/>
    <property type="chains" value="M=1-125"/>
</dbReference>
<dbReference type="PDB" id="7M4V">
    <property type="method" value="EM"/>
    <property type="resolution" value="2.54 A"/>
    <property type="chains" value="M=1-125"/>
</dbReference>
<dbReference type="PDB" id="7M4W">
    <property type="method" value="EM"/>
    <property type="resolution" value="2.55 A"/>
    <property type="chains" value="M=1-125"/>
</dbReference>
<dbReference type="PDB" id="7M4X">
    <property type="method" value="EM"/>
    <property type="resolution" value="2.66 A"/>
    <property type="chains" value="M=1-125"/>
</dbReference>
<dbReference type="PDB" id="7M4Y">
    <property type="method" value="EM"/>
    <property type="resolution" value="2.50 A"/>
    <property type="chains" value="M=1-125"/>
</dbReference>
<dbReference type="PDB" id="7M4Z">
    <property type="method" value="EM"/>
    <property type="resolution" value="2.92 A"/>
    <property type="chains" value="M=1-125"/>
</dbReference>
<dbReference type="PDB" id="7RYF">
    <property type="method" value="EM"/>
    <property type="resolution" value="2.65 A"/>
    <property type="chains" value="M=1-125"/>
</dbReference>
<dbReference type="PDB" id="7RYG">
    <property type="method" value="EM"/>
    <property type="resolution" value="2.38 A"/>
    <property type="chains" value="M=1-125"/>
</dbReference>
<dbReference type="PDB" id="7RYH">
    <property type="method" value="EM"/>
    <property type="resolution" value="2.43 A"/>
    <property type="chains" value="M=1-125"/>
</dbReference>
<dbReference type="PDB" id="7UVV">
    <property type="method" value="EM"/>
    <property type="resolution" value="2.50 A"/>
    <property type="chains" value="M=1-125"/>
</dbReference>
<dbReference type="PDB" id="7UVW">
    <property type="method" value="EM"/>
    <property type="resolution" value="2.37 A"/>
    <property type="chains" value="M=1-125"/>
</dbReference>
<dbReference type="PDB" id="7UVX">
    <property type="method" value="EM"/>
    <property type="resolution" value="2.35 A"/>
    <property type="chains" value="M=1-125"/>
</dbReference>
<dbReference type="PDB" id="7UVY">
    <property type="method" value="EM"/>
    <property type="resolution" value="2.39 A"/>
    <property type="chains" value="M=1-125"/>
</dbReference>
<dbReference type="PDB" id="7UVZ">
    <property type="method" value="EM"/>
    <property type="resolution" value="2.21 A"/>
    <property type="chains" value="M=1-125"/>
</dbReference>
<dbReference type="PDB" id="7UW1">
    <property type="method" value="EM"/>
    <property type="resolution" value="2.21 A"/>
    <property type="chains" value="M=1-125"/>
</dbReference>
<dbReference type="PDBsum" id="6V39"/>
<dbReference type="PDBsum" id="6V3A"/>
<dbReference type="PDBsum" id="6V3B"/>
<dbReference type="PDBsum" id="6V3D"/>
<dbReference type="PDBsum" id="7M4V"/>
<dbReference type="PDBsum" id="7M4W"/>
<dbReference type="PDBsum" id="7M4X"/>
<dbReference type="PDBsum" id="7M4Y"/>
<dbReference type="PDBsum" id="7M4Z"/>
<dbReference type="PDBsum" id="7RYF"/>
<dbReference type="PDBsum" id="7RYG"/>
<dbReference type="PDBsum" id="7RYH"/>
<dbReference type="PDBsum" id="7UVV"/>
<dbReference type="PDBsum" id="7UVW"/>
<dbReference type="PDBsum" id="7UVX"/>
<dbReference type="PDBsum" id="7UVY"/>
<dbReference type="PDBsum" id="7UVZ"/>
<dbReference type="PDBsum" id="7UW1"/>
<dbReference type="EMDB" id="EMD-21030"/>
<dbReference type="EMDB" id="EMD-21031"/>
<dbReference type="EMDB" id="EMD-21032"/>
<dbReference type="EMDB" id="EMD-21033"/>
<dbReference type="EMDB" id="EMD-23667"/>
<dbReference type="EMDB" id="EMD-23668"/>
<dbReference type="EMDB" id="EMD-23669"/>
<dbReference type="EMDB" id="EMD-23670"/>
<dbReference type="EMDB" id="EMD-23671"/>
<dbReference type="EMDB" id="EMD-24738"/>
<dbReference type="EMDB" id="EMD-24739"/>
<dbReference type="EMDB" id="EMD-24740"/>
<dbReference type="EMDB" id="EMD-26817"/>
<dbReference type="EMDB" id="EMD-26818"/>
<dbReference type="EMDB" id="EMD-26819"/>
<dbReference type="EMDB" id="EMD-26820"/>
<dbReference type="EMDB" id="EMD-26821"/>
<dbReference type="EMDB" id="EMD-26822"/>
<dbReference type="SMR" id="B7IA13"/>
<dbReference type="IntAct" id="B7IA13">
    <property type="interactions" value="2"/>
</dbReference>
<dbReference type="KEGG" id="abn:AB57_3504"/>
<dbReference type="HOGENOM" id="CLU_074407_2_0_6"/>
<dbReference type="Proteomes" id="UP000007094">
    <property type="component" value="Chromosome"/>
</dbReference>
<dbReference type="GO" id="GO:0022625">
    <property type="term" value="C:cytosolic large ribosomal subunit"/>
    <property type="evidence" value="ECO:0007669"/>
    <property type="project" value="TreeGrafter"/>
</dbReference>
<dbReference type="GO" id="GO:0003735">
    <property type="term" value="F:structural constituent of ribosome"/>
    <property type="evidence" value="ECO:0007669"/>
    <property type="project" value="InterPro"/>
</dbReference>
<dbReference type="GO" id="GO:0006412">
    <property type="term" value="P:translation"/>
    <property type="evidence" value="ECO:0007669"/>
    <property type="project" value="UniProtKB-UniRule"/>
</dbReference>
<dbReference type="FunFam" id="3.90.1030.10:FF:000001">
    <property type="entry name" value="50S ribosomal protein L17"/>
    <property type="match status" value="1"/>
</dbReference>
<dbReference type="Gene3D" id="3.90.1030.10">
    <property type="entry name" value="Ribosomal protein L17"/>
    <property type="match status" value="1"/>
</dbReference>
<dbReference type="HAMAP" id="MF_01368">
    <property type="entry name" value="Ribosomal_bL17"/>
    <property type="match status" value="1"/>
</dbReference>
<dbReference type="InterPro" id="IPR000456">
    <property type="entry name" value="Ribosomal_bL17"/>
</dbReference>
<dbReference type="InterPro" id="IPR047859">
    <property type="entry name" value="Ribosomal_bL17_CS"/>
</dbReference>
<dbReference type="InterPro" id="IPR036373">
    <property type="entry name" value="Ribosomal_bL17_sf"/>
</dbReference>
<dbReference type="NCBIfam" id="TIGR00059">
    <property type="entry name" value="L17"/>
    <property type="match status" value="1"/>
</dbReference>
<dbReference type="PANTHER" id="PTHR14413:SF16">
    <property type="entry name" value="LARGE RIBOSOMAL SUBUNIT PROTEIN BL17M"/>
    <property type="match status" value="1"/>
</dbReference>
<dbReference type="PANTHER" id="PTHR14413">
    <property type="entry name" value="RIBOSOMAL PROTEIN L17"/>
    <property type="match status" value="1"/>
</dbReference>
<dbReference type="Pfam" id="PF01196">
    <property type="entry name" value="Ribosomal_L17"/>
    <property type="match status" value="1"/>
</dbReference>
<dbReference type="SUPFAM" id="SSF64263">
    <property type="entry name" value="Prokaryotic ribosomal protein L17"/>
    <property type="match status" value="1"/>
</dbReference>
<dbReference type="PROSITE" id="PS01167">
    <property type="entry name" value="RIBOSOMAL_L17"/>
    <property type="match status" value="1"/>
</dbReference>
<proteinExistence type="evidence at protein level"/>
<reference key="1">
    <citation type="journal article" date="2008" name="J. Bacteriol.">
        <title>Comparative genome sequence analysis of multidrug-resistant Acinetobacter baumannii.</title>
        <authorList>
            <person name="Adams M.D."/>
            <person name="Goglin K."/>
            <person name="Molyneaux N."/>
            <person name="Hujer K.M."/>
            <person name="Lavender H."/>
            <person name="Jamison J.J."/>
            <person name="MacDonald I.J."/>
            <person name="Martin K.M."/>
            <person name="Russo T."/>
            <person name="Campagnari A.A."/>
            <person name="Hujer A.M."/>
            <person name="Bonomo R.A."/>
            <person name="Gill S.R."/>
        </authorList>
    </citation>
    <scope>NUCLEOTIDE SEQUENCE [LARGE SCALE GENOMIC DNA]</scope>
    <source>
        <strain>AB0057</strain>
    </source>
</reference>
<organism>
    <name type="scientific">Acinetobacter baumannii (strain AB0057)</name>
    <dbReference type="NCBI Taxonomy" id="480119"/>
    <lineage>
        <taxon>Bacteria</taxon>
        <taxon>Pseudomonadati</taxon>
        <taxon>Pseudomonadota</taxon>
        <taxon>Gammaproteobacteria</taxon>
        <taxon>Moraxellales</taxon>
        <taxon>Moraxellaceae</taxon>
        <taxon>Acinetobacter</taxon>
        <taxon>Acinetobacter calcoaceticus/baumannii complex</taxon>
    </lineage>
</organism>
<sequence>MRHRNSGVKLGRTSSHRKAMFENLANSLFEHELIKTTLPKAKELRRVAEPLITLAKNDTVANRRLAFARTRNAATVGKLFTVLGPRYKERNGGYLRVLKAGFRAGDAAPMAYVELVDREVNTSAE</sequence>
<gene>
    <name evidence="1" type="primary">rplQ</name>
    <name type="ordered locus">AB57_3504</name>
</gene>
<name>RL17_ACIB5</name>
<accession>B7IA13</accession>
<keyword id="KW-0002">3D-structure</keyword>
<keyword id="KW-0687">Ribonucleoprotein</keyword>
<keyword id="KW-0689">Ribosomal protein</keyword>
<evidence type="ECO:0000255" key="1">
    <source>
        <dbReference type="HAMAP-Rule" id="MF_01368"/>
    </source>
</evidence>
<evidence type="ECO:0000305" key="2"/>
<evidence type="ECO:0007829" key="3">
    <source>
        <dbReference type="PDB" id="7M4V"/>
    </source>
</evidence>
<feature type="chain" id="PRO_1000144359" description="Large ribosomal subunit protein bL17">
    <location>
        <begin position="1"/>
        <end position="125"/>
    </location>
</feature>
<feature type="helix" evidence="3">
    <location>
        <begin position="14"/>
        <end position="31"/>
    </location>
</feature>
<feature type="strand" evidence="3">
    <location>
        <begin position="32"/>
        <end position="37"/>
    </location>
</feature>
<feature type="helix" evidence="3">
    <location>
        <begin position="38"/>
        <end position="55"/>
    </location>
</feature>
<feature type="helix" evidence="3">
    <location>
        <begin position="60"/>
        <end position="70"/>
    </location>
</feature>
<feature type="helix" evidence="3">
    <location>
        <begin position="73"/>
        <end position="86"/>
    </location>
</feature>
<feature type="strand" evidence="3">
    <location>
        <begin position="95"/>
        <end position="102"/>
    </location>
</feature>
<feature type="turn" evidence="3">
    <location>
        <begin position="104"/>
        <end position="106"/>
    </location>
</feature>
<feature type="strand" evidence="3">
    <location>
        <begin position="109"/>
        <end position="115"/>
    </location>
</feature>